<dbReference type="EC" id="2.7.1.167" evidence="1"/>
<dbReference type="EC" id="2.7.7.70" evidence="1"/>
<dbReference type="EMBL" id="CP000644">
    <property type="protein sequence ID" value="ABO88688.1"/>
    <property type="molecule type" value="Genomic_DNA"/>
</dbReference>
<dbReference type="RefSeq" id="WP_005313939.1">
    <property type="nucleotide sequence ID" value="NC_009348.1"/>
</dbReference>
<dbReference type="SMR" id="A4SIG6"/>
<dbReference type="STRING" id="29491.GCA_000820065_02981"/>
<dbReference type="KEGG" id="asa:ASA_0522"/>
<dbReference type="PATRIC" id="fig|382245.13.peg.525"/>
<dbReference type="eggNOG" id="COG0615">
    <property type="taxonomic scope" value="Bacteria"/>
</dbReference>
<dbReference type="eggNOG" id="COG2870">
    <property type="taxonomic scope" value="Bacteria"/>
</dbReference>
<dbReference type="HOGENOM" id="CLU_021150_2_1_6"/>
<dbReference type="UniPathway" id="UPA00356">
    <property type="reaction ID" value="UER00437"/>
</dbReference>
<dbReference type="UniPathway" id="UPA00356">
    <property type="reaction ID" value="UER00439"/>
</dbReference>
<dbReference type="Proteomes" id="UP000000225">
    <property type="component" value="Chromosome"/>
</dbReference>
<dbReference type="GO" id="GO:0005829">
    <property type="term" value="C:cytosol"/>
    <property type="evidence" value="ECO:0007669"/>
    <property type="project" value="TreeGrafter"/>
</dbReference>
<dbReference type="GO" id="GO:0005524">
    <property type="term" value="F:ATP binding"/>
    <property type="evidence" value="ECO:0007669"/>
    <property type="project" value="UniProtKB-UniRule"/>
</dbReference>
<dbReference type="GO" id="GO:0033785">
    <property type="term" value="F:heptose 7-phosphate kinase activity"/>
    <property type="evidence" value="ECO:0007669"/>
    <property type="project" value="UniProtKB-UniRule"/>
</dbReference>
<dbReference type="GO" id="GO:0033786">
    <property type="term" value="F:heptose-1-phosphate adenylyltransferase activity"/>
    <property type="evidence" value="ECO:0007669"/>
    <property type="project" value="UniProtKB-UniRule"/>
</dbReference>
<dbReference type="GO" id="GO:0016773">
    <property type="term" value="F:phosphotransferase activity, alcohol group as acceptor"/>
    <property type="evidence" value="ECO:0007669"/>
    <property type="project" value="InterPro"/>
</dbReference>
<dbReference type="GO" id="GO:0097171">
    <property type="term" value="P:ADP-L-glycero-beta-D-manno-heptose biosynthetic process"/>
    <property type="evidence" value="ECO:0007669"/>
    <property type="project" value="UniProtKB-UniPathway"/>
</dbReference>
<dbReference type="CDD" id="cd01172">
    <property type="entry name" value="RfaE_like"/>
    <property type="match status" value="1"/>
</dbReference>
<dbReference type="FunFam" id="3.40.1190.20:FF:000002">
    <property type="entry name" value="Bifunctional protein HldE"/>
    <property type="match status" value="1"/>
</dbReference>
<dbReference type="FunFam" id="3.40.50.620:FF:000028">
    <property type="entry name" value="Bifunctional protein HldE"/>
    <property type="match status" value="1"/>
</dbReference>
<dbReference type="Gene3D" id="3.40.1190.20">
    <property type="match status" value="1"/>
</dbReference>
<dbReference type="Gene3D" id="3.40.50.620">
    <property type="entry name" value="HUPs"/>
    <property type="match status" value="1"/>
</dbReference>
<dbReference type="HAMAP" id="MF_01603">
    <property type="entry name" value="HldE"/>
    <property type="match status" value="1"/>
</dbReference>
<dbReference type="InterPro" id="IPR023030">
    <property type="entry name" value="Bifunc_HldE"/>
</dbReference>
<dbReference type="InterPro" id="IPR002173">
    <property type="entry name" value="Carboh/pur_kinase_PfkB_CS"/>
</dbReference>
<dbReference type="InterPro" id="IPR004821">
    <property type="entry name" value="Cyt_trans-like"/>
</dbReference>
<dbReference type="InterPro" id="IPR011611">
    <property type="entry name" value="PfkB_dom"/>
</dbReference>
<dbReference type="InterPro" id="IPR011913">
    <property type="entry name" value="RfaE_dom_I"/>
</dbReference>
<dbReference type="InterPro" id="IPR011914">
    <property type="entry name" value="RfaE_dom_II"/>
</dbReference>
<dbReference type="InterPro" id="IPR029056">
    <property type="entry name" value="Ribokinase-like"/>
</dbReference>
<dbReference type="InterPro" id="IPR014729">
    <property type="entry name" value="Rossmann-like_a/b/a_fold"/>
</dbReference>
<dbReference type="NCBIfam" id="TIGR00125">
    <property type="entry name" value="cyt_tran_rel"/>
    <property type="match status" value="1"/>
</dbReference>
<dbReference type="NCBIfam" id="NF008454">
    <property type="entry name" value="PRK11316.1"/>
    <property type="match status" value="1"/>
</dbReference>
<dbReference type="NCBIfam" id="TIGR02198">
    <property type="entry name" value="rfaE_dom_I"/>
    <property type="match status" value="1"/>
</dbReference>
<dbReference type="NCBIfam" id="TIGR02199">
    <property type="entry name" value="rfaE_dom_II"/>
    <property type="match status" value="1"/>
</dbReference>
<dbReference type="PANTHER" id="PTHR46969">
    <property type="entry name" value="BIFUNCTIONAL PROTEIN HLDE"/>
    <property type="match status" value="1"/>
</dbReference>
<dbReference type="PANTHER" id="PTHR46969:SF1">
    <property type="entry name" value="BIFUNCTIONAL PROTEIN HLDE"/>
    <property type="match status" value="1"/>
</dbReference>
<dbReference type="Pfam" id="PF01467">
    <property type="entry name" value="CTP_transf_like"/>
    <property type="match status" value="1"/>
</dbReference>
<dbReference type="Pfam" id="PF00294">
    <property type="entry name" value="PfkB"/>
    <property type="match status" value="1"/>
</dbReference>
<dbReference type="SUPFAM" id="SSF52374">
    <property type="entry name" value="Nucleotidylyl transferase"/>
    <property type="match status" value="1"/>
</dbReference>
<dbReference type="SUPFAM" id="SSF53613">
    <property type="entry name" value="Ribokinase-like"/>
    <property type="match status" value="1"/>
</dbReference>
<dbReference type="PROSITE" id="PS00583">
    <property type="entry name" value="PFKB_KINASES_1"/>
    <property type="match status" value="1"/>
</dbReference>
<feature type="chain" id="PRO_0000291668" description="Bifunctional protein HldE">
    <location>
        <begin position="1"/>
        <end position="475"/>
    </location>
</feature>
<feature type="region of interest" description="Ribokinase">
    <location>
        <begin position="1"/>
        <end position="318"/>
    </location>
</feature>
<feature type="region of interest" description="Cytidylyltransferase">
    <location>
        <begin position="344"/>
        <end position="475"/>
    </location>
</feature>
<feature type="active site" evidence="1">
    <location>
        <position position="264"/>
    </location>
</feature>
<feature type="binding site" evidence="1">
    <location>
        <begin position="195"/>
        <end position="198"/>
    </location>
    <ligand>
        <name>ATP</name>
        <dbReference type="ChEBI" id="CHEBI:30616"/>
    </ligand>
</feature>
<keyword id="KW-0067">ATP-binding</keyword>
<keyword id="KW-0119">Carbohydrate metabolism</keyword>
<keyword id="KW-0418">Kinase</keyword>
<keyword id="KW-0511">Multifunctional enzyme</keyword>
<keyword id="KW-0547">Nucleotide-binding</keyword>
<keyword id="KW-0548">Nucleotidyltransferase</keyword>
<keyword id="KW-0808">Transferase</keyword>
<organism>
    <name type="scientific">Aeromonas salmonicida (strain A449)</name>
    <dbReference type="NCBI Taxonomy" id="382245"/>
    <lineage>
        <taxon>Bacteria</taxon>
        <taxon>Pseudomonadati</taxon>
        <taxon>Pseudomonadota</taxon>
        <taxon>Gammaproteobacteria</taxon>
        <taxon>Aeromonadales</taxon>
        <taxon>Aeromonadaceae</taxon>
        <taxon>Aeromonas</taxon>
    </lineage>
</organism>
<accession>A4SIG6</accession>
<sequence>MKITLPEFGKARVLVVGDVMLDRYWHGPTGRISPEAPVPVVKVEHIEERPGGAANVALNSAALGAHAVLLGLTGQDEAADALAGQMAGVKVACDFVRLADYPTITKLRVLSRNQQLLRLDFEEAFHDVDSTLLMNKVEQALPSSDVMILSDYGKGALNDVPGMIQRARAAGIPVLVDPKGTEFEKYRGATLLTPNMSEFEAVVGKVKGEEDLVAKGLALVKRFELEALLVTRSENGMTLIREGQPELHLPAQAHEVYDVTGAGDTVISTLATSLAAGMSLDEACALANTAAGIVVGKLGTSTVSPVELANALYTEQETGFGVMSEAQLKIAVQAARLRGEKVVMTNGCFDILHAGHVSYLANAGKLGDRLIVAVNTDGSVRRLKGPGRPVNSTDRRMAVLAGLGAVDWVVPFAEDTPQRLIAEVLPDLLVKGGDYKPKDIAGYDEVTANGGEVRVLNFEDGCSTSDIIKTIRERG</sequence>
<reference key="1">
    <citation type="journal article" date="2008" name="BMC Genomics">
        <title>The genome of Aeromonas salmonicida subsp. salmonicida A449: insights into the evolution of a fish pathogen.</title>
        <authorList>
            <person name="Reith M.E."/>
            <person name="Singh R.K."/>
            <person name="Curtis B."/>
            <person name="Boyd J.M."/>
            <person name="Bouevitch A."/>
            <person name="Kimball J."/>
            <person name="Munholland J."/>
            <person name="Murphy C."/>
            <person name="Sarty D."/>
            <person name="Williams J."/>
            <person name="Nash J.H."/>
            <person name="Johnson S.C."/>
            <person name="Brown L.L."/>
        </authorList>
    </citation>
    <scope>NUCLEOTIDE SEQUENCE [LARGE SCALE GENOMIC DNA]</scope>
    <source>
        <strain>A449</strain>
    </source>
</reference>
<evidence type="ECO:0000255" key="1">
    <source>
        <dbReference type="HAMAP-Rule" id="MF_01603"/>
    </source>
</evidence>
<protein>
    <recommendedName>
        <fullName evidence="1">Bifunctional protein HldE</fullName>
    </recommendedName>
    <domain>
        <recommendedName>
            <fullName evidence="1">D-beta-D-heptose 7-phosphate kinase</fullName>
            <ecNumber evidence="1">2.7.1.167</ecNumber>
        </recommendedName>
        <alternativeName>
            <fullName evidence="1">D-beta-D-heptose 7-phosphotransferase</fullName>
        </alternativeName>
        <alternativeName>
            <fullName evidence="1">D-glycero-beta-D-manno-heptose-7-phosphate kinase</fullName>
        </alternativeName>
    </domain>
    <domain>
        <recommendedName>
            <fullName evidence="1">D-beta-D-heptose 1-phosphate adenylyltransferase</fullName>
            <ecNumber evidence="1">2.7.7.70</ecNumber>
        </recommendedName>
        <alternativeName>
            <fullName evidence="1">D-glycero-beta-D-manno-heptose 1-phosphate adenylyltransferase</fullName>
        </alternativeName>
    </domain>
</protein>
<comment type="function">
    <text evidence="1">Catalyzes the phosphorylation of D-glycero-D-manno-heptose 7-phosphate at the C-1 position to selectively form D-glycero-beta-D-manno-heptose-1,7-bisphosphate.</text>
</comment>
<comment type="function">
    <text evidence="1">Catalyzes the ADP transfer from ATP to D-glycero-beta-D-manno-heptose 1-phosphate, yielding ADP-D-glycero-beta-D-manno-heptose.</text>
</comment>
<comment type="catalytic activity">
    <reaction evidence="1">
        <text>D-glycero-beta-D-manno-heptose 7-phosphate + ATP = D-glycero-beta-D-manno-heptose 1,7-bisphosphate + ADP + H(+)</text>
        <dbReference type="Rhea" id="RHEA:27473"/>
        <dbReference type="ChEBI" id="CHEBI:15378"/>
        <dbReference type="ChEBI" id="CHEBI:30616"/>
        <dbReference type="ChEBI" id="CHEBI:60204"/>
        <dbReference type="ChEBI" id="CHEBI:60208"/>
        <dbReference type="ChEBI" id="CHEBI:456216"/>
        <dbReference type="EC" id="2.7.1.167"/>
    </reaction>
</comment>
<comment type="catalytic activity">
    <reaction evidence="1">
        <text>D-glycero-beta-D-manno-heptose 1-phosphate + ATP + H(+) = ADP-D-glycero-beta-D-manno-heptose + diphosphate</text>
        <dbReference type="Rhea" id="RHEA:27465"/>
        <dbReference type="ChEBI" id="CHEBI:15378"/>
        <dbReference type="ChEBI" id="CHEBI:30616"/>
        <dbReference type="ChEBI" id="CHEBI:33019"/>
        <dbReference type="ChEBI" id="CHEBI:59967"/>
        <dbReference type="ChEBI" id="CHEBI:61593"/>
        <dbReference type="EC" id="2.7.7.70"/>
    </reaction>
</comment>
<comment type="pathway">
    <text evidence="1">Nucleotide-sugar biosynthesis; ADP-L-glycero-beta-D-manno-heptose biosynthesis; ADP-L-glycero-beta-D-manno-heptose from D-glycero-beta-D-manno-heptose 7-phosphate: step 1/4.</text>
</comment>
<comment type="pathway">
    <text evidence="1">Nucleotide-sugar biosynthesis; ADP-L-glycero-beta-D-manno-heptose biosynthesis; ADP-L-glycero-beta-D-manno-heptose from D-glycero-beta-D-manno-heptose 7-phosphate: step 3/4.</text>
</comment>
<comment type="subunit">
    <text evidence="1">Homodimer.</text>
</comment>
<comment type="similarity">
    <text evidence="1">In the N-terminal section; belongs to the carbohydrate kinase PfkB family.</text>
</comment>
<comment type="similarity">
    <text evidence="1">In the C-terminal section; belongs to the cytidylyltransferase family.</text>
</comment>
<name>HLDE_AERS4</name>
<proteinExistence type="inferred from homology"/>
<gene>
    <name evidence="1" type="primary">hldE</name>
    <name type="ordered locus">ASA_0522</name>
</gene>